<reference key="1">
    <citation type="journal article" date="2003" name="Proc. Natl. Acad. Sci. U.S.A.">
        <title>Genome sequence of the cyanobacterium Prochlorococcus marinus SS120, a nearly minimal oxyphototrophic genome.</title>
        <authorList>
            <person name="Dufresne A."/>
            <person name="Salanoubat M."/>
            <person name="Partensky F."/>
            <person name="Artiguenave F."/>
            <person name="Axmann I.M."/>
            <person name="Barbe V."/>
            <person name="Duprat S."/>
            <person name="Galperin M.Y."/>
            <person name="Koonin E.V."/>
            <person name="Le Gall F."/>
            <person name="Makarova K.S."/>
            <person name="Ostrowski M."/>
            <person name="Oztas S."/>
            <person name="Robert C."/>
            <person name="Rogozin I.B."/>
            <person name="Scanlan D.J."/>
            <person name="Tandeau de Marsac N."/>
            <person name="Weissenbach J."/>
            <person name="Wincker P."/>
            <person name="Wolf Y.I."/>
            <person name="Hess W.R."/>
        </authorList>
    </citation>
    <scope>NUCLEOTIDE SEQUENCE [LARGE SCALE GENOMIC DNA]</scope>
    <source>
        <strain>SARG / CCMP1375 / SS120</strain>
    </source>
</reference>
<gene>
    <name evidence="1" type="primary">lysS</name>
    <name type="synonym">lysU</name>
    <name type="ordered locus">Pro_1779</name>
</gene>
<protein>
    <recommendedName>
        <fullName evidence="1">Lysine--tRNA ligase</fullName>
        <ecNumber evidence="1">6.1.1.6</ecNumber>
    </recommendedName>
    <alternativeName>
        <fullName evidence="1">Lysyl-tRNA synthetase</fullName>
        <shortName evidence="1">LysRS</shortName>
    </alternativeName>
</protein>
<feature type="chain" id="PRO_0000152665" description="Lysine--tRNA ligase">
    <location>
        <begin position="1"/>
        <end position="502"/>
    </location>
</feature>
<feature type="binding site" evidence="1">
    <location>
        <position position="409"/>
    </location>
    <ligand>
        <name>Mg(2+)</name>
        <dbReference type="ChEBI" id="CHEBI:18420"/>
        <label>1</label>
    </ligand>
</feature>
<feature type="binding site" evidence="1">
    <location>
        <position position="416"/>
    </location>
    <ligand>
        <name>Mg(2+)</name>
        <dbReference type="ChEBI" id="CHEBI:18420"/>
        <label>1</label>
    </ligand>
</feature>
<feature type="binding site" evidence="1">
    <location>
        <position position="416"/>
    </location>
    <ligand>
        <name>Mg(2+)</name>
        <dbReference type="ChEBI" id="CHEBI:18420"/>
        <label>2</label>
    </ligand>
</feature>
<sequence length="502" mass="57017">MSDLRETRLEKAASLRKVGKDPYALNFHPTHKTAELQSDHKDLPNGQDREIKVAVAGRVLSRRVMGKLAFFTLLDESGSIQLFLEKATLEEFDTSENQVSSFKQITDFVDAGDWLGVNGILRRTDRGELSIKVHSWKILCKSLQPLPDKWHGLADIEKRYRQRYLDLVVNPDSRKTFRRRALTVSAIRRWLDERSFLEIETPVLQSAAGGADARPFITHHNTFDIPLFLRIATELHLKRLVVGGFERVYELGRIFRNEGISTRHNPEFTSVEIYQAFADYNQMMDLTEELISSVCIEICGSTKISYQDVSLDLTPPWRRVTMQELVLEATGIDFDNFDGDQEKASSEMINLGLEVPSTADSVGRLMNEAFEQKVEPNLIQPTFVIDYPIDISPLARKHRCKEDMVERFELFIAGRETANAFSELIDPIDQRERLLAQQIRKNEGDIEAHSLDEDFLNALEVGMPPTGGLGIGIDRLVMLLTDSPSIRDVIAFPLLRPDSGSQ</sequence>
<comment type="catalytic activity">
    <reaction evidence="1">
        <text>tRNA(Lys) + L-lysine + ATP = L-lysyl-tRNA(Lys) + AMP + diphosphate</text>
        <dbReference type="Rhea" id="RHEA:20792"/>
        <dbReference type="Rhea" id="RHEA-COMP:9696"/>
        <dbReference type="Rhea" id="RHEA-COMP:9697"/>
        <dbReference type="ChEBI" id="CHEBI:30616"/>
        <dbReference type="ChEBI" id="CHEBI:32551"/>
        <dbReference type="ChEBI" id="CHEBI:33019"/>
        <dbReference type="ChEBI" id="CHEBI:78442"/>
        <dbReference type="ChEBI" id="CHEBI:78529"/>
        <dbReference type="ChEBI" id="CHEBI:456215"/>
        <dbReference type="EC" id="6.1.1.6"/>
    </reaction>
</comment>
<comment type="cofactor">
    <cofactor evidence="1">
        <name>Mg(2+)</name>
        <dbReference type="ChEBI" id="CHEBI:18420"/>
    </cofactor>
    <text evidence="1">Binds 3 Mg(2+) ions per subunit.</text>
</comment>
<comment type="subunit">
    <text evidence="1">Homodimer.</text>
</comment>
<comment type="subcellular location">
    <subcellularLocation>
        <location evidence="1">Cytoplasm</location>
    </subcellularLocation>
</comment>
<comment type="similarity">
    <text evidence="1">Belongs to the class-II aminoacyl-tRNA synthetase family.</text>
</comment>
<evidence type="ECO:0000255" key="1">
    <source>
        <dbReference type="HAMAP-Rule" id="MF_00252"/>
    </source>
</evidence>
<accession>Q7V9Q0</accession>
<keyword id="KW-0030">Aminoacyl-tRNA synthetase</keyword>
<keyword id="KW-0067">ATP-binding</keyword>
<keyword id="KW-0963">Cytoplasm</keyword>
<keyword id="KW-0436">Ligase</keyword>
<keyword id="KW-0460">Magnesium</keyword>
<keyword id="KW-0479">Metal-binding</keyword>
<keyword id="KW-0547">Nucleotide-binding</keyword>
<keyword id="KW-0648">Protein biosynthesis</keyword>
<keyword id="KW-1185">Reference proteome</keyword>
<dbReference type="EC" id="6.1.1.6" evidence="1"/>
<dbReference type="EMBL" id="AE017126">
    <property type="protein sequence ID" value="AAQ00823.1"/>
    <property type="molecule type" value="Genomic_DNA"/>
</dbReference>
<dbReference type="RefSeq" id="NP_876170.1">
    <property type="nucleotide sequence ID" value="NC_005042.1"/>
</dbReference>
<dbReference type="RefSeq" id="WP_011125928.1">
    <property type="nucleotide sequence ID" value="NC_005042.1"/>
</dbReference>
<dbReference type="SMR" id="Q7V9Q0"/>
<dbReference type="STRING" id="167539.Pro_1779"/>
<dbReference type="EnsemblBacteria" id="AAQ00823">
    <property type="protein sequence ID" value="AAQ00823"/>
    <property type="gene ID" value="Pro_1779"/>
</dbReference>
<dbReference type="KEGG" id="pma:Pro_1779"/>
<dbReference type="PATRIC" id="fig|167539.5.peg.1880"/>
<dbReference type="eggNOG" id="COG1190">
    <property type="taxonomic scope" value="Bacteria"/>
</dbReference>
<dbReference type="HOGENOM" id="CLU_008255_6_0_3"/>
<dbReference type="OrthoDB" id="9802326at2"/>
<dbReference type="Proteomes" id="UP000001420">
    <property type="component" value="Chromosome"/>
</dbReference>
<dbReference type="GO" id="GO:0005829">
    <property type="term" value="C:cytosol"/>
    <property type="evidence" value="ECO:0007669"/>
    <property type="project" value="TreeGrafter"/>
</dbReference>
<dbReference type="GO" id="GO:0005524">
    <property type="term" value="F:ATP binding"/>
    <property type="evidence" value="ECO:0007669"/>
    <property type="project" value="UniProtKB-UniRule"/>
</dbReference>
<dbReference type="GO" id="GO:0004824">
    <property type="term" value="F:lysine-tRNA ligase activity"/>
    <property type="evidence" value="ECO:0007669"/>
    <property type="project" value="UniProtKB-UniRule"/>
</dbReference>
<dbReference type="GO" id="GO:0000287">
    <property type="term" value="F:magnesium ion binding"/>
    <property type="evidence" value="ECO:0007669"/>
    <property type="project" value="UniProtKB-UniRule"/>
</dbReference>
<dbReference type="GO" id="GO:0000049">
    <property type="term" value="F:tRNA binding"/>
    <property type="evidence" value="ECO:0007669"/>
    <property type="project" value="TreeGrafter"/>
</dbReference>
<dbReference type="GO" id="GO:0006430">
    <property type="term" value="P:lysyl-tRNA aminoacylation"/>
    <property type="evidence" value="ECO:0007669"/>
    <property type="project" value="UniProtKB-UniRule"/>
</dbReference>
<dbReference type="CDD" id="cd00775">
    <property type="entry name" value="LysRS_core"/>
    <property type="match status" value="1"/>
</dbReference>
<dbReference type="CDD" id="cd04322">
    <property type="entry name" value="LysRS_N"/>
    <property type="match status" value="1"/>
</dbReference>
<dbReference type="FunFam" id="2.40.50.140:FF:000024">
    <property type="entry name" value="Lysine--tRNA ligase"/>
    <property type="match status" value="1"/>
</dbReference>
<dbReference type="Gene3D" id="3.30.930.10">
    <property type="entry name" value="Bira Bifunctional Protein, Domain 2"/>
    <property type="match status" value="1"/>
</dbReference>
<dbReference type="Gene3D" id="2.40.50.140">
    <property type="entry name" value="Nucleic acid-binding proteins"/>
    <property type="match status" value="1"/>
</dbReference>
<dbReference type="HAMAP" id="MF_00252">
    <property type="entry name" value="Lys_tRNA_synth_class2"/>
    <property type="match status" value="1"/>
</dbReference>
<dbReference type="InterPro" id="IPR004364">
    <property type="entry name" value="Aa-tRNA-synt_II"/>
</dbReference>
<dbReference type="InterPro" id="IPR006195">
    <property type="entry name" value="aa-tRNA-synth_II"/>
</dbReference>
<dbReference type="InterPro" id="IPR045864">
    <property type="entry name" value="aa-tRNA-synth_II/BPL/LPL"/>
</dbReference>
<dbReference type="InterPro" id="IPR002313">
    <property type="entry name" value="Lys-tRNA-ligase_II"/>
</dbReference>
<dbReference type="InterPro" id="IPR044136">
    <property type="entry name" value="Lys-tRNA-ligase_II_N"/>
</dbReference>
<dbReference type="InterPro" id="IPR018149">
    <property type="entry name" value="Lys-tRNA-synth_II_C"/>
</dbReference>
<dbReference type="InterPro" id="IPR012340">
    <property type="entry name" value="NA-bd_OB-fold"/>
</dbReference>
<dbReference type="InterPro" id="IPR004365">
    <property type="entry name" value="NA-bd_OB_tRNA"/>
</dbReference>
<dbReference type="NCBIfam" id="TIGR00499">
    <property type="entry name" value="lysS_bact"/>
    <property type="match status" value="1"/>
</dbReference>
<dbReference type="NCBIfam" id="NF001756">
    <property type="entry name" value="PRK00484.1"/>
    <property type="match status" value="1"/>
</dbReference>
<dbReference type="PANTHER" id="PTHR42918:SF15">
    <property type="entry name" value="LYSINE--TRNA LIGASE, CHLOROPLASTIC_MITOCHONDRIAL"/>
    <property type="match status" value="1"/>
</dbReference>
<dbReference type="PANTHER" id="PTHR42918">
    <property type="entry name" value="LYSYL-TRNA SYNTHETASE"/>
    <property type="match status" value="1"/>
</dbReference>
<dbReference type="Pfam" id="PF00152">
    <property type="entry name" value="tRNA-synt_2"/>
    <property type="match status" value="1"/>
</dbReference>
<dbReference type="Pfam" id="PF01336">
    <property type="entry name" value="tRNA_anti-codon"/>
    <property type="match status" value="1"/>
</dbReference>
<dbReference type="PRINTS" id="PR00982">
    <property type="entry name" value="TRNASYNTHLYS"/>
</dbReference>
<dbReference type="SUPFAM" id="SSF55681">
    <property type="entry name" value="Class II aaRS and biotin synthetases"/>
    <property type="match status" value="1"/>
</dbReference>
<dbReference type="SUPFAM" id="SSF50249">
    <property type="entry name" value="Nucleic acid-binding proteins"/>
    <property type="match status" value="1"/>
</dbReference>
<dbReference type="PROSITE" id="PS50862">
    <property type="entry name" value="AA_TRNA_LIGASE_II"/>
    <property type="match status" value="1"/>
</dbReference>
<organism>
    <name type="scientific">Prochlorococcus marinus (strain SARG / CCMP1375 / SS120)</name>
    <dbReference type="NCBI Taxonomy" id="167539"/>
    <lineage>
        <taxon>Bacteria</taxon>
        <taxon>Bacillati</taxon>
        <taxon>Cyanobacteriota</taxon>
        <taxon>Cyanophyceae</taxon>
        <taxon>Synechococcales</taxon>
        <taxon>Prochlorococcaceae</taxon>
        <taxon>Prochlorococcus</taxon>
    </lineage>
</organism>
<name>SYK_PROMA</name>
<proteinExistence type="inferred from homology"/>